<feature type="chain" id="PRO_0000374535" description="tRNA-2-methylthio-N(6)-dimethylallyladenosine synthase">
    <location>
        <begin position="1"/>
        <end position="474"/>
    </location>
</feature>
<feature type="domain" description="MTTase N-terminal" evidence="1">
    <location>
        <begin position="3"/>
        <end position="120"/>
    </location>
</feature>
<feature type="domain" description="Radical SAM core" evidence="2">
    <location>
        <begin position="143"/>
        <end position="375"/>
    </location>
</feature>
<feature type="domain" description="TRAM" evidence="1">
    <location>
        <begin position="378"/>
        <end position="441"/>
    </location>
</feature>
<feature type="binding site" evidence="1">
    <location>
        <position position="12"/>
    </location>
    <ligand>
        <name>[4Fe-4S] cluster</name>
        <dbReference type="ChEBI" id="CHEBI:49883"/>
        <label>1</label>
    </ligand>
</feature>
<feature type="binding site" evidence="1">
    <location>
        <position position="49"/>
    </location>
    <ligand>
        <name>[4Fe-4S] cluster</name>
        <dbReference type="ChEBI" id="CHEBI:49883"/>
        <label>1</label>
    </ligand>
</feature>
<feature type="binding site" evidence="1">
    <location>
        <position position="83"/>
    </location>
    <ligand>
        <name>[4Fe-4S] cluster</name>
        <dbReference type="ChEBI" id="CHEBI:49883"/>
        <label>1</label>
    </ligand>
</feature>
<feature type="binding site" evidence="1">
    <location>
        <position position="157"/>
    </location>
    <ligand>
        <name>[4Fe-4S] cluster</name>
        <dbReference type="ChEBI" id="CHEBI:49883"/>
        <label>2</label>
        <note>4Fe-4S-S-AdoMet</note>
    </ligand>
</feature>
<feature type="binding site" evidence="1">
    <location>
        <position position="161"/>
    </location>
    <ligand>
        <name>[4Fe-4S] cluster</name>
        <dbReference type="ChEBI" id="CHEBI:49883"/>
        <label>2</label>
        <note>4Fe-4S-S-AdoMet</note>
    </ligand>
</feature>
<feature type="binding site" evidence="1">
    <location>
        <position position="164"/>
    </location>
    <ligand>
        <name>[4Fe-4S] cluster</name>
        <dbReference type="ChEBI" id="CHEBI:49883"/>
        <label>2</label>
        <note>4Fe-4S-S-AdoMet</note>
    </ligand>
</feature>
<protein>
    <recommendedName>
        <fullName evidence="1">tRNA-2-methylthio-N(6)-dimethylallyladenosine synthase</fullName>
        <ecNumber evidence="1">2.8.4.3</ecNumber>
    </recommendedName>
    <alternativeName>
        <fullName evidence="1">(Dimethylallyl)adenosine tRNA methylthiotransferase MiaB</fullName>
    </alternativeName>
    <alternativeName>
        <fullName evidence="1">tRNA-i(6)A37 methylthiotransferase</fullName>
    </alternativeName>
</protein>
<name>MIAB_SHEB8</name>
<comment type="function">
    <text evidence="1">Catalyzes the methylthiolation of N6-(dimethylallyl)adenosine (i(6)A), leading to the formation of 2-methylthio-N6-(dimethylallyl)adenosine (ms(2)i(6)A) at position 37 in tRNAs that read codons beginning with uridine.</text>
</comment>
<comment type="catalytic activity">
    <reaction evidence="1">
        <text>N(6)-dimethylallyladenosine(37) in tRNA + (sulfur carrier)-SH + AH2 + 2 S-adenosyl-L-methionine = 2-methylsulfanyl-N(6)-dimethylallyladenosine(37) in tRNA + (sulfur carrier)-H + 5'-deoxyadenosine + L-methionine + A + S-adenosyl-L-homocysteine + 2 H(+)</text>
        <dbReference type="Rhea" id="RHEA:37067"/>
        <dbReference type="Rhea" id="RHEA-COMP:10375"/>
        <dbReference type="Rhea" id="RHEA-COMP:10376"/>
        <dbReference type="Rhea" id="RHEA-COMP:14737"/>
        <dbReference type="Rhea" id="RHEA-COMP:14739"/>
        <dbReference type="ChEBI" id="CHEBI:13193"/>
        <dbReference type="ChEBI" id="CHEBI:15378"/>
        <dbReference type="ChEBI" id="CHEBI:17319"/>
        <dbReference type="ChEBI" id="CHEBI:17499"/>
        <dbReference type="ChEBI" id="CHEBI:29917"/>
        <dbReference type="ChEBI" id="CHEBI:57844"/>
        <dbReference type="ChEBI" id="CHEBI:57856"/>
        <dbReference type="ChEBI" id="CHEBI:59789"/>
        <dbReference type="ChEBI" id="CHEBI:64428"/>
        <dbReference type="ChEBI" id="CHEBI:74415"/>
        <dbReference type="ChEBI" id="CHEBI:74417"/>
        <dbReference type="EC" id="2.8.4.3"/>
    </reaction>
</comment>
<comment type="cofactor">
    <cofactor evidence="1">
        <name>[4Fe-4S] cluster</name>
        <dbReference type="ChEBI" id="CHEBI:49883"/>
    </cofactor>
    <text evidence="1">Binds 2 [4Fe-4S] clusters. One cluster is coordinated with 3 cysteines and an exchangeable S-adenosyl-L-methionine.</text>
</comment>
<comment type="subunit">
    <text evidence="1">Monomer.</text>
</comment>
<comment type="subcellular location">
    <subcellularLocation>
        <location evidence="1">Cytoplasm</location>
    </subcellularLocation>
</comment>
<comment type="similarity">
    <text evidence="1">Belongs to the methylthiotransferase family. MiaB subfamily.</text>
</comment>
<organism>
    <name type="scientific">Shewanella baltica (strain OS185)</name>
    <dbReference type="NCBI Taxonomy" id="402882"/>
    <lineage>
        <taxon>Bacteria</taxon>
        <taxon>Pseudomonadati</taxon>
        <taxon>Pseudomonadota</taxon>
        <taxon>Gammaproteobacteria</taxon>
        <taxon>Alteromonadales</taxon>
        <taxon>Shewanellaceae</taxon>
        <taxon>Shewanella</taxon>
    </lineage>
</organism>
<sequence length="474" mass="53678">MSKKLHIKTWGCQMNEYDSSKMADLLGEYQGYTLTEEASEADILLLNTCSIREKAQEKVFHQLGRWKTLKDKNPNLIIGVGGCVASQEGKAIKDRAQCVDIIFGPQTLHRLPEMIEQVRRGDKAVIDISFPEIEKFDRLPEPRAEGPTAFVSIMEGCSKYCSFCVVPYTRGEEVSRPSDDIILEIAQLAEQGVREVNLLGQNVNAYRGATHDGAICTFAELLRFVAAIDGIDRIRFTTSHPIEFTQDIIDVYEDTPELVSFLHLPVQSGSDRILTAMKRGHMAIEYKSIIRRLRKAREGIQISSDFIIGFPGETKEDFADTMKLIEDIGFDHSFSFIYSARPGTPAADLPDNVDMEEKKQRLAILQDRITQQAMRYSRHMMGTVQRILVEGPSVKNPMELRGRTENNRVVNFEGQPKHIGTFVDVEIVDVYTNSLRGVFIRGEDEMDLRRSLRPAEILAKRKQDDELGVTQFKP</sequence>
<proteinExistence type="inferred from homology"/>
<accession>A6WRJ1</accession>
<dbReference type="EC" id="2.8.4.3" evidence="1"/>
<dbReference type="EMBL" id="CP000753">
    <property type="protein sequence ID" value="ABS09430.1"/>
    <property type="molecule type" value="Genomic_DNA"/>
</dbReference>
<dbReference type="RefSeq" id="WP_006082739.1">
    <property type="nucleotide sequence ID" value="NC_009665.1"/>
</dbReference>
<dbReference type="SMR" id="A6WRJ1"/>
<dbReference type="GeneID" id="11773487"/>
<dbReference type="KEGG" id="sbm:Shew185_3303"/>
<dbReference type="HOGENOM" id="CLU_018697_2_0_6"/>
<dbReference type="GO" id="GO:0005829">
    <property type="term" value="C:cytosol"/>
    <property type="evidence" value="ECO:0007669"/>
    <property type="project" value="TreeGrafter"/>
</dbReference>
<dbReference type="GO" id="GO:0051539">
    <property type="term" value="F:4 iron, 4 sulfur cluster binding"/>
    <property type="evidence" value="ECO:0007669"/>
    <property type="project" value="UniProtKB-UniRule"/>
</dbReference>
<dbReference type="GO" id="GO:0046872">
    <property type="term" value="F:metal ion binding"/>
    <property type="evidence" value="ECO:0007669"/>
    <property type="project" value="UniProtKB-KW"/>
</dbReference>
<dbReference type="GO" id="GO:0035597">
    <property type="term" value="F:N6-isopentenyladenosine methylthiotransferase activity"/>
    <property type="evidence" value="ECO:0007669"/>
    <property type="project" value="TreeGrafter"/>
</dbReference>
<dbReference type="CDD" id="cd01335">
    <property type="entry name" value="Radical_SAM"/>
    <property type="match status" value="1"/>
</dbReference>
<dbReference type="FunFam" id="3.40.50.12160:FF:000001">
    <property type="entry name" value="tRNA-2-methylthio-N(6)-dimethylallyladenosine synthase"/>
    <property type="match status" value="1"/>
</dbReference>
<dbReference type="FunFam" id="3.80.30.20:FF:000001">
    <property type="entry name" value="tRNA-2-methylthio-N(6)-dimethylallyladenosine synthase 2"/>
    <property type="match status" value="1"/>
</dbReference>
<dbReference type="Gene3D" id="3.40.50.12160">
    <property type="entry name" value="Methylthiotransferase, N-terminal domain"/>
    <property type="match status" value="1"/>
</dbReference>
<dbReference type="Gene3D" id="3.80.30.20">
    <property type="entry name" value="tm_1862 like domain"/>
    <property type="match status" value="1"/>
</dbReference>
<dbReference type="HAMAP" id="MF_01864">
    <property type="entry name" value="tRNA_metthiotr_MiaB"/>
    <property type="match status" value="1"/>
</dbReference>
<dbReference type="InterPro" id="IPR006638">
    <property type="entry name" value="Elp3/MiaA/NifB-like_rSAM"/>
</dbReference>
<dbReference type="InterPro" id="IPR005839">
    <property type="entry name" value="Methylthiotransferase"/>
</dbReference>
<dbReference type="InterPro" id="IPR020612">
    <property type="entry name" value="Methylthiotransferase_CS"/>
</dbReference>
<dbReference type="InterPro" id="IPR013848">
    <property type="entry name" value="Methylthiotransferase_N"/>
</dbReference>
<dbReference type="InterPro" id="IPR038135">
    <property type="entry name" value="Methylthiotransferase_N_sf"/>
</dbReference>
<dbReference type="InterPro" id="IPR006463">
    <property type="entry name" value="MiaB_methiolase"/>
</dbReference>
<dbReference type="InterPro" id="IPR007197">
    <property type="entry name" value="rSAM"/>
</dbReference>
<dbReference type="InterPro" id="IPR023404">
    <property type="entry name" value="rSAM_horseshoe"/>
</dbReference>
<dbReference type="InterPro" id="IPR002792">
    <property type="entry name" value="TRAM_dom"/>
</dbReference>
<dbReference type="NCBIfam" id="TIGR01574">
    <property type="entry name" value="miaB-methiolase"/>
    <property type="match status" value="1"/>
</dbReference>
<dbReference type="NCBIfam" id="TIGR00089">
    <property type="entry name" value="MiaB/RimO family radical SAM methylthiotransferase"/>
    <property type="match status" value="1"/>
</dbReference>
<dbReference type="PANTHER" id="PTHR43020">
    <property type="entry name" value="CDK5 REGULATORY SUBUNIT-ASSOCIATED PROTEIN 1"/>
    <property type="match status" value="1"/>
</dbReference>
<dbReference type="PANTHER" id="PTHR43020:SF2">
    <property type="entry name" value="MITOCHONDRIAL TRNA METHYLTHIOTRANSFERASE CDK5RAP1"/>
    <property type="match status" value="1"/>
</dbReference>
<dbReference type="Pfam" id="PF04055">
    <property type="entry name" value="Radical_SAM"/>
    <property type="match status" value="1"/>
</dbReference>
<dbReference type="Pfam" id="PF01938">
    <property type="entry name" value="TRAM"/>
    <property type="match status" value="1"/>
</dbReference>
<dbReference type="Pfam" id="PF00919">
    <property type="entry name" value="UPF0004"/>
    <property type="match status" value="1"/>
</dbReference>
<dbReference type="SFLD" id="SFLDF00273">
    <property type="entry name" value="(dimethylallyl)adenosine_tRNA"/>
    <property type="match status" value="1"/>
</dbReference>
<dbReference type="SFLD" id="SFLDG01082">
    <property type="entry name" value="B12-binding_domain_containing"/>
    <property type="match status" value="1"/>
</dbReference>
<dbReference type="SFLD" id="SFLDG01061">
    <property type="entry name" value="methylthiotransferase"/>
    <property type="match status" value="1"/>
</dbReference>
<dbReference type="SMART" id="SM00729">
    <property type="entry name" value="Elp3"/>
    <property type="match status" value="1"/>
</dbReference>
<dbReference type="SUPFAM" id="SSF102114">
    <property type="entry name" value="Radical SAM enzymes"/>
    <property type="match status" value="1"/>
</dbReference>
<dbReference type="PROSITE" id="PS51449">
    <property type="entry name" value="MTTASE_N"/>
    <property type="match status" value="1"/>
</dbReference>
<dbReference type="PROSITE" id="PS01278">
    <property type="entry name" value="MTTASE_RADICAL"/>
    <property type="match status" value="1"/>
</dbReference>
<dbReference type="PROSITE" id="PS51918">
    <property type="entry name" value="RADICAL_SAM"/>
    <property type="match status" value="1"/>
</dbReference>
<dbReference type="PROSITE" id="PS50926">
    <property type="entry name" value="TRAM"/>
    <property type="match status" value="1"/>
</dbReference>
<evidence type="ECO:0000255" key="1">
    <source>
        <dbReference type="HAMAP-Rule" id="MF_01864"/>
    </source>
</evidence>
<evidence type="ECO:0000255" key="2">
    <source>
        <dbReference type="PROSITE-ProRule" id="PRU01266"/>
    </source>
</evidence>
<reference key="1">
    <citation type="submission" date="2007-07" db="EMBL/GenBank/DDBJ databases">
        <title>Complete sequence of chromosome of Shewanella baltica OS185.</title>
        <authorList>
            <consortium name="US DOE Joint Genome Institute"/>
            <person name="Copeland A."/>
            <person name="Lucas S."/>
            <person name="Lapidus A."/>
            <person name="Barry K."/>
            <person name="Glavina del Rio T."/>
            <person name="Dalin E."/>
            <person name="Tice H."/>
            <person name="Pitluck S."/>
            <person name="Sims D."/>
            <person name="Brettin T."/>
            <person name="Bruce D."/>
            <person name="Detter J.C."/>
            <person name="Han C."/>
            <person name="Schmutz J."/>
            <person name="Larimer F."/>
            <person name="Land M."/>
            <person name="Hauser L."/>
            <person name="Kyrpides N."/>
            <person name="Mikhailova N."/>
            <person name="Brettar I."/>
            <person name="Rodrigues J."/>
            <person name="Konstantinidis K."/>
            <person name="Tiedje J."/>
            <person name="Richardson P."/>
        </authorList>
    </citation>
    <scope>NUCLEOTIDE SEQUENCE [LARGE SCALE GENOMIC DNA]</scope>
    <source>
        <strain>OS185</strain>
    </source>
</reference>
<keyword id="KW-0004">4Fe-4S</keyword>
<keyword id="KW-0963">Cytoplasm</keyword>
<keyword id="KW-0408">Iron</keyword>
<keyword id="KW-0411">Iron-sulfur</keyword>
<keyword id="KW-0479">Metal-binding</keyword>
<keyword id="KW-0949">S-adenosyl-L-methionine</keyword>
<keyword id="KW-0808">Transferase</keyword>
<keyword id="KW-0819">tRNA processing</keyword>
<gene>
    <name evidence="1" type="primary">miaB</name>
    <name type="ordered locus">Shew185_3303</name>
</gene>